<gene>
    <name evidence="1" type="primary">ung</name>
    <name type="ordered locus">PSEEN4312</name>
</gene>
<feature type="chain" id="PRO_1000009928" description="Uracil-DNA glycosylase">
    <location>
        <begin position="1"/>
        <end position="230"/>
    </location>
</feature>
<feature type="active site" description="Proton acceptor" evidence="1">
    <location>
        <position position="70"/>
    </location>
</feature>
<accession>Q1I5T6</accession>
<name>UNG_PSEE4</name>
<evidence type="ECO:0000255" key="1">
    <source>
        <dbReference type="HAMAP-Rule" id="MF_00148"/>
    </source>
</evidence>
<reference key="1">
    <citation type="journal article" date="2006" name="Nat. Biotechnol.">
        <title>Complete genome sequence of the entomopathogenic and metabolically versatile soil bacterium Pseudomonas entomophila.</title>
        <authorList>
            <person name="Vodovar N."/>
            <person name="Vallenet D."/>
            <person name="Cruveiller S."/>
            <person name="Rouy Z."/>
            <person name="Barbe V."/>
            <person name="Acosta C."/>
            <person name="Cattolico L."/>
            <person name="Jubin C."/>
            <person name="Lajus A."/>
            <person name="Segurens B."/>
            <person name="Vacherie B."/>
            <person name="Wincker P."/>
            <person name="Weissenbach J."/>
            <person name="Lemaitre B."/>
            <person name="Medigue C."/>
            <person name="Boccard F."/>
        </authorList>
    </citation>
    <scope>NUCLEOTIDE SEQUENCE [LARGE SCALE GENOMIC DNA]</scope>
    <source>
        <strain>L48</strain>
    </source>
</reference>
<comment type="function">
    <text evidence="1">Excises uracil residues from the DNA which can arise as a result of misincorporation of dUMP residues by DNA polymerase or due to deamination of cytosine.</text>
</comment>
<comment type="catalytic activity">
    <reaction evidence="1">
        <text>Hydrolyzes single-stranded DNA or mismatched double-stranded DNA and polynucleotides, releasing free uracil.</text>
        <dbReference type="EC" id="3.2.2.27"/>
    </reaction>
</comment>
<comment type="subcellular location">
    <subcellularLocation>
        <location evidence="1">Cytoplasm</location>
    </subcellularLocation>
</comment>
<comment type="similarity">
    <text evidence="1">Belongs to the uracil-DNA glycosylase (UDG) superfamily. UNG family.</text>
</comment>
<dbReference type="EC" id="3.2.2.27" evidence="1"/>
<dbReference type="EMBL" id="CT573326">
    <property type="protein sequence ID" value="CAK16999.1"/>
    <property type="molecule type" value="Genomic_DNA"/>
</dbReference>
<dbReference type="RefSeq" id="WP_011535370.1">
    <property type="nucleotide sequence ID" value="NC_008027.1"/>
</dbReference>
<dbReference type="SMR" id="Q1I5T6"/>
<dbReference type="STRING" id="384676.PSEEN4312"/>
<dbReference type="GeneID" id="32807315"/>
<dbReference type="KEGG" id="pen:PSEEN4312"/>
<dbReference type="eggNOG" id="COG0692">
    <property type="taxonomic scope" value="Bacteria"/>
</dbReference>
<dbReference type="HOGENOM" id="CLU_032162_3_1_6"/>
<dbReference type="OrthoDB" id="9804372at2"/>
<dbReference type="Proteomes" id="UP000000658">
    <property type="component" value="Chromosome"/>
</dbReference>
<dbReference type="GO" id="GO:0005737">
    <property type="term" value="C:cytoplasm"/>
    <property type="evidence" value="ECO:0007669"/>
    <property type="project" value="UniProtKB-SubCell"/>
</dbReference>
<dbReference type="GO" id="GO:0004844">
    <property type="term" value="F:uracil DNA N-glycosylase activity"/>
    <property type="evidence" value="ECO:0007669"/>
    <property type="project" value="UniProtKB-UniRule"/>
</dbReference>
<dbReference type="GO" id="GO:0097510">
    <property type="term" value="P:base-excision repair, AP site formation via deaminated base removal"/>
    <property type="evidence" value="ECO:0007669"/>
    <property type="project" value="TreeGrafter"/>
</dbReference>
<dbReference type="CDD" id="cd10027">
    <property type="entry name" value="UDG-F1-like"/>
    <property type="match status" value="1"/>
</dbReference>
<dbReference type="FunFam" id="3.40.470.10:FF:000001">
    <property type="entry name" value="Uracil-DNA glycosylase"/>
    <property type="match status" value="1"/>
</dbReference>
<dbReference type="Gene3D" id="3.40.470.10">
    <property type="entry name" value="Uracil-DNA glycosylase-like domain"/>
    <property type="match status" value="1"/>
</dbReference>
<dbReference type="HAMAP" id="MF_00148">
    <property type="entry name" value="UDG"/>
    <property type="match status" value="1"/>
</dbReference>
<dbReference type="InterPro" id="IPR002043">
    <property type="entry name" value="UDG_fam1"/>
</dbReference>
<dbReference type="InterPro" id="IPR018085">
    <property type="entry name" value="Ura-DNA_Glyclase_AS"/>
</dbReference>
<dbReference type="InterPro" id="IPR005122">
    <property type="entry name" value="Uracil-DNA_glycosylase-like"/>
</dbReference>
<dbReference type="InterPro" id="IPR036895">
    <property type="entry name" value="Uracil-DNA_glycosylase-like_sf"/>
</dbReference>
<dbReference type="NCBIfam" id="NF003588">
    <property type="entry name" value="PRK05254.1-1"/>
    <property type="match status" value="1"/>
</dbReference>
<dbReference type="NCBIfam" id="NF003589">
    <property type="entry name" value="PRK05254.1-2"/>
    <property type="match status" value="1"/>
</dbReference>
<dbReference type="NCBIfam" id="NF003591">
    <property type="entry name" value="PRK05254.1-4"/>
    <property type="match status" value="1"/>
</dbReference>
<dbReference type="NCBIfam" id="NF003592">
    <property type="entry name" value="PRK05254.1-5"/>
    <property type="match status" value="1"/>
</dbReference>
<dbReference type="NCBIfam" id="TIGR00628">
    <property type="entry name" value="ung"/>
    <property type="match status" value="1"/>
</dbReference>
<dbReference type="PANTHER" id="PTHR11264">
    <property type="entry name" value="URACIL-DNA GLYCOSYLASE"/>
    <property type="match status" value="1"/>
</dbReference>
<dbReference type="PANTHER" id="PTHR11264:SF0">
    <property type="entry name" value="URACIL-DNA GLYCOSYLASE"/>
    <property type="match status" value="1"/>
</dbReference>
<dbReference type="Pfam" id="PF03167">
    <property type="entry name" value="UDG"/>
    <property type="match status" value="1"/>
</dbReference>
<dbReference type="SMART" id="SM00986">
    <property type="entry name" value="UDG"/>
    <property type="match status" value="1"/>
</dbReference>
<dbReference type="SMART" id="SM00987">
    <property type="entry name" value="UreE_C"/>
    <property type="match status" value="1"/>
</dbReference>
<dbReference type="SUPFAM" id="SSF52141">
    <property type="entry name" value="Uracil-DNA glycosylase-like"/>
    <property type="match status" value="1"/>
</dbReference>
<dbReference type="PROSITE" id="PS00130">
    <property type="entry name" value="U_DNA_GLYCOSYLASE"/>
    <property type="match status" value="1"/>
</dbReference>
<keyword id="KW-0963">Cytoplasm</keyword>
<keyword id="KW-0227">DNA damage</keyword>
<keyword id="KW-0234">DNA repair</keyword>
<keyword id="KW-0378">Hydrolase</keyword>
<organism>
    <name type="scientific">Pseudomonas entomophila (strain L48)</name>
    <dbReference type="NCBI Taxonomy" id="384676"/>
    <lineage>
        <taxon>Bacteria</taxon>
        <taxon>Pseudomonadati</taxon>
        <taxon>Pseudomonadota</taxon>
        <taxon>Gammaproteobacteria</taxon>
        <taxon>Pseudomonadales</taxon>
        <taxon>Pseudomonadaceae</taxon>
        <taxon>Pseudomonas</taxon>
    </lineage>
</organism>
<sequence>MTDDDRIKLEPSWKAALRAEFDQPYMHQLREFLRQEYAAGKEIYPPGPLIFNALNSTPLEQVKVVILGQDPYHGPGQAHGLCFSVQPGVPAPPSLVNIYKELQRDLNLPIPNHGYLQSWAEQGVLLLNTTMTVQRANAASHAKKGWEFFTDRIIQVVSEQCPNVVFLLWGAHAQSKQKLIDGTRHLVLKSVHPSPLSAYRGFFGCGHFSRANGFLQQHGMAPIDWSLPPL</sequence>
<protein>
    <recommendedName>
        <fullName evidence="1">Uracil-DNA glycosylase</fullName>
        <shortName evidence="1">UDG</shortName>
        <ecNumber evidence="1">3.2.2.27</ecNumber>
    </recommendedName>
</protein>
<proteinExistence type="inferred from homology"/>